<dbReference type="EMBL" id="AAFI02000103">
    <property type="protein sequence ID" value="EAL63649.1"/>
    <property type="molecule type" value="Genomic_DNA"/>
</dbReference>
<dbReference type="RefSeq" id="XP_637153.1">
    <property type="nucleotide sequence ID" value="XM_632061.1"/>
</dbReference>
<dbReference type="SMR" id="Q54K11"/>
<dbReference type="FunCoup" id="Q54K11">
    <property type="interactions" value="1"/>
</dbReference>
<dbReference type="STRING" id="44689.Q54K11"/>
<dbReference type="GlyCosmos" id="Q54K11">
    <property type="glycosylation" value="23 sites, No reported glycans"/>
</dbReference>
<dbReference type="GlyGen" id="Q54K11">
    <property type="glycosylation" value="23 sites"/>
</dbReference>
<dbReference type="PaxDb" id="44689-DDB0231992"/>
<dbReference type="EnsemblProtists" id="EAL63649">
    <property type="protein sequence ID" value="EAL63649"/>
    <property type="gene ID" value="DDB_G0287681"/>
</dbReference>
<dbReference type="GeneID" id="8626248"/>
<dbReference type="KEGG" id="ddi:DDB_G0287681"/>
<dbReference type="dictyBase" id="DDB_G0287681">
    <property type="gene designation" value="grlR"/>
</dbReference>
<dbReference type="VEuPathDB" id="AmoebaDB:DDB_G0287681"/>
<dbReference type="eggNOG" id="KOG1055">
    <property type="taxonomic scope" value="Eukaryota"/>
</dbReference>
<dbReference type="HOGENOM" id="CLU_244163_0_0_1"/>
<dbReference type="InParanoid" id="Q54K11"/>
<dbReference type="OMA" id="STCIVSN"/>
<dbReference type="PhylomeDB" id="Q54K11"/>
<dbReference type="PRO" id="PR:Q54K11"/>
<dbReference type="Proteomes" id="UP000002195">
    <property type="component" value="Chromosome 5"/>
</dbReference>
<dbReference type="GO" id="GO:0016020">
    <property type="term" value="C:membrane"/>
    <property type="evidence" value="ECO:0007669"/>
    <property type="project" value="UniProtKB-SubCell"/>
</dbReference>
<dbReference type="GO" id="GO:0004965">
    <property type="term" value="F:G protein-coupled GABA receptor activity"/>
    <property type="evidence" value="ECO:0007669"/>
    <property type="project" value="InterPro"/>
</dbReference>
<dbReference type="CDD" id="cd15047">
    <property type="entry name" value="7tmC_GABA-B-like"/>
    <property type="match status" value="1"/>
</dbReference>
<dbReference type="Gene3D" id="2.160.20.10">
    <property type="entry name" value="Single-stranded right-handed beta-helix, Pectin lyase-like"/>
    <property type="match status" value="1"/>
</dbReference>
<dbReference type="InterPro" id="IPR002455">
    <property type="entry name" value="GPCR3_GABA-B"/>
</dbReference>
<dbReference type="InterPro" id="IPR017978">
    <property type="entry name" value="GPCR_3_C"/>
</dbReference>
<dbReference type="InterPro" id="IPR012334">
    <property type="entry name" value="Pectin_lyas_fold"/>
</dbReference>
<dbReference type="InterPro" id="IPR011050">
    <property type="entry name" value="Pectin_lyase_fold/virulence"/>
</dbReference>
<dbReference type="PANTHER" id="PTHR10519">
    <property type="entry name" value="GABA-B RECEPTOR"/>
    <property type="match status" value="1"/>
</dbReference>
<dbReference type="PANTHER" id="PTHR10519:SF66">
    <property type="entry name" value="METABOTROPIC GLUTAMATE RECEPTOR-LIKE PROTEIN P"/>
    <property type="match status" value="1"/>
</dbReference>
<dbReference type="Pfam" id="PF00003">
    <property type="entry name" value="7tm_3"/>
    <property type="match status" value="1"/>
</dbReference>
<dbReference type="SUPFAM" id="SSF51126">
    <property type="entry name" value="Pectin lyase-like"/>
    <property type="match status" value="1"/>
</dbReference>
<dbReference type="PROSITE" id="PS50259">
    <property type="entry name" value="G_PROTEIN_RECEP_F3_4"/>
    <property type="match status" value="1"/>
</dbReference>
<accession>Q54K11</accession>
<feature type="signal peptide" evidence="1">
    <location>
        <begin position="1"/>
        <end position="27"/>
    </location>
</feature>
<feature type="chain" id="PRO_0000370361" description="Metabotropic glutamate receptor-like protein R">
    <location>
        <begin position="28"/>
        <end position="1604"/>
    </location>
</feature>
<feature type="topological domain" description="Extracellular" evidence="1">
    <location>
        <begin position="28"/>
        <end position="1149"/>
    </location>
</feature>
<feature type="transmembrane region" description="Helical; Name=1" evidence="1">
    <location>
        <begin position="1150"/>
        <end position="1170"/>
    </location>
</feature>
<feature type="topological domain" description="Cytoplasmic" evidence="1">
    <location>
        <begin position="1171"/>
        <end position="1184"/>
    </location>
</feature>
<feature type="transmembrane region" description="Helical; Name=2" evidence="1">
    <location>
        <begin position="1185"/>
        <end position="1205"/>
    </location>
</feature>
<feature type="topological domain" description="Extracellular" evidence="1">
    <location>
        <begin position="1206"/>
        <end position="1211"/>
    </location>
</feature>
<feature type="transmembrane region" description="Helical; Name=3" evidence="1">
    <location>
        <begin position="1212"/>
        <end position="1232"/>
    </location>
</feature>
<feature type="topological domain" description="Cytoplasmic" evidence="1">
    <location>
        <begin position="1233"/>
        <end position="1256"/>
    </location>
</feature>
<feature type="transmembrane region" description="Helical; Name=4" evidence="1">
    <location>
        <begin position="1257"/>
        <end position="1277"/>
    </location>
</feature>
<feature type="topological domain" description="Extracellular" evidence="1">
    <location>
        <begin position="1278"/>
        <end position="1304"/>
    </location>
</feature>
<feature type="transmembrane region" description="Helical; Name=5" evidence="1">
    <location>
        <begin position="1305"/>
        <end position="1325"/>
    </location>
</feature>
<feature type="topological domain" description="Cytoplasmic" evidence="1">
    <location>
        <begin position="1326"/>
        <end position="1340"/>
    </location>
</feature>
<feature type="transmembrane region" description="Helical; Name=6" evidence="1">
    <location>
        <begin position="1341"/>
        <end position="1361"/>
    </location>
</feature>
<feature type="topological domain" description="Extracellular" evidence="1">
    <location>
        <begin position="1362"/>
        <end position="1372"/>
    </location>
</feature>
<feature type="transmembrane region" description="Helical; Name=7" evidence="1">
    <location>
        <begin position="1373"/>
        <end position="1393"/>
    </location>
</feature>
<feature type="topological domain" description="Cytoplasmic" evidence="1">
    <location>
        <begin position="1394"/>
        <end position="1604"/>
    </location>
</feature>
<feature type="region of interest" description="Disordered" evidence="2">
    <location>
        <begin position="38"/>
        <end position="72"/>
    </location>
</feature>
<feature type="region of interest" description="Disordered" evidence="2">
    <location>
        <begin position="213"/>
        <end position="263"/>
    </location>
</feature>
<feature type="region of interest" description="Disordered" evidence="2">
    <location>
        <begin position="1457"/>
        <end position="1604"/>
    </location>
</feature>
<feature type="coiled-coil region" evidence="1">
    <location>
        <begin position="98"/>
        <end position="133"/>
    </location>
</feature>
<feature type="compositionally biased region" description="Low complexity" evidence="2">
    <location>
        <begin position="38"/>
        <end position="69"/>
    </location>
</feature>
<feature type="compositionally biased region" description="Low complexity" evidence="2">
    <location>
        <begin position="1471"/>
        <end position="1527"/>
    </location>
</feature>
<feature type="compositionally biased region" description="Low complexity" evidence="2">
    <location>
        <begin position="1534"/>
        <end position="1556"/>
    </location>
</feature>
<feature type="compositionally biased region" description="Basic residues" evidence="2">
    <location>
        <begin position="1563"/>
        <end position="1572"/>
    </location>
</feature>
<feature type="compositionally biased region" description="Polar residues" evidence="2">
    <location>
        <begin position="1573"/>
        <end position="1584"/>
    </location>
</feature>
<feature type="glycosylation site" description="N-linked (GlcNAc...) asparagine" evidence="1">
    <location>
        <position position="285"/>
    </location>
</feature>
<feature type="glycosylation site" description="N-linked (GlcNAc...) asparagine" evidence="1">
    <location>
        <position position="327"/>
    </location>
</feature>
<feature type="glycosylation site" description="N-linked (GlcNAc...) asparagine" evidence="1">
    <location>
        <position position="359"/>
    </location>
</feature>
<feature type="glycosylation site" description="N-linked (GlcNAc...) asparagine" evidence="1">
    <location>
        <position position="375"/>
    </location>
</feature>
<feature type="glycosylation site" description="N-linked (GlcNAc...) asparagine" evidence="1">
    <location>
        <position position="489"/>
    </location>
</feature>
<feature type="glycosylation site" description="N-linked (GlcNAc...) asparagine" evidence="1">
    <location>
        <position position="498"/>
    </location>
</feature>
<feature type="glycosylation site" description="N-linked (GlcNAc...) asparagine" evidence="1">
    <location>
        <position position="525"/>
    </location>
</feature>
<feature type="glycosylation site" description="N-linked (GlcNAc...) asparagine" evidence="1">
    <location>
        <position position="577"/>
    </location>
</feature>
<feature type="glycosylation site" description="N-linked (GlcNAc...) asparagine" evidence="1">
    <location>
        <position position="593"/>
    </location>
</feature>
<feature type="glycosylation site" description="N-linked (GlcNAc...) asparagine" evidence="1">
    <location>
        <position position="624"/>
    </location>
</feature>
<feature type="glycosylation site" description="N-linked (GlcNAc...) asparagine" evidence="1">
    <location>
        <position position="768"/>
    </location>
</feature>
<feature type="glycosylation site" description="N-linked (GlcNAc...) asparagine" evidence="1">
    <location>
        <position position="837"/>
    </location>
</feature>
<feature type="glycosylation site" description="N-linked (GlcNAc...) asparagine" evidence="1">
    <location>
        <position position="841"/>
    </location>
</feature>
<feature type="glycosylation site" description="N-linked (GlcNAc...) asparagine" evidence="1">
    <location>
        <position position="851"/>
    </location>
</feature>
<feature type="glycosylation site" description="N-linked (GlcNAc...) asparagine" evidence="1">
    <location>
        <position position="864"/>
    </location>
</feature>
<feature type="glycosylation site" description="N-linked (GlcNAc...) asparagine" evidence="1">
    <location>
        <position position="876"/>
    </location>
</feature>
<feature type="glycosylation site" description="N-linked (GlcNAc...) asparagine" evidence="1">
    <location>
        <position position="885"/>
    </location>
</feature>
<feature type="glycosylation site" description="N-linked (GlcNAc...) asparagine" evidence="1">
    <location>
        <position position="888"/>
    </location>
</feature>
<feature type="glycosylation site" description="N-linked (GlcNAc...) asparagine" evidence="1">
    <location>
        <position position="913"/>
    </location>
</feature>
<feature type="glycosylation site" description="N-linked (GlcNAc...) asparagine" evidence="1">
    <location>
        <position position="967"/>
    </location>
</feature>
<feature type="glycosylation site" description="N-linked (GlcNAc...) asparagine" evidence="1">
    <location>
        <position position="991"/>
    </location>
</feature>
<feature type="glycosylation site" description="N-linked (GlcNAc...) asparagine" evidence="1">
    <location>
        <position position="1097"/>
    </location>
</feature>
<feature type="glycosylation site" description="N-linked (GlcNAc...) asparagine" evidence="1">
    <location>
        <position position="1109"/>
    </location>
</feature>
<reference key="1">
    <citation type="journal article" date="2005" name="Nature">
        <title>The genome of the social amoeba Dictyostelium discoideum.</title>
        <authorList>
            <person name="Eichinger L."/>
            <person name="Pachebat J.A."/>
            <person name="Gloeckner G."/>
            <person name="Rajandream M.A."/>
            <person name="Sucgang R."/>
            <person name="Berriman M."/>
            <person name="Song J."/>
            <person name="Olsen R."/>
            <person name="Szafranski K."/>
            <person name="Xu Q."/>
            <person name="Tunggal B."/>
            <person name="Kummerfeld S."/>
            <person name="Madera M."/>
            <person name="Konfortov B.A."/>
            <person name="Rivero F."/>
            <person name="Bankier A.T."/>
            <person name="Lehmann R."/>
            <person name="Hamlin N."/>
            <person name="Davies R."/>
            <person name="Gaudet P."/>
            <person name="Fey P."/>
            <person name="Pilcher K."/>
            <person name="Chen G."/>
            <person name="Saunders D."/>
            <person name="Sodergren E.J."/>
            <person name="Davis P."/>
            <person name="Kerhornou A."/>
            <person name="Nie X."/>
            <person name="Hall N."/>
            <person name="Anjard C."/>
            <person name="Hemphill L."/>
            <person name="Bason N."/>
            <person name="Farbrother P."/>
            <person name="Desany B."/>
            <person name="Just E."/>
            <person name="Morio T."/>
            <person name="Rost R."/>
            <person name="Churcher C.M."/>
            <person name="Cooper J."/>
            <person name="Haydock S."/>
            <person name="van Driessche N."/>
            <person name="Cronin A."/>
            <person name="Goodhead I."/>
            <person name="Muzny D.M."/>
            <person name="Mourier T."/>
            <person name="Pain A."/>
            <person name="Lu M."/>
            <person name="Harper D."/>
            <person name="Lindsay R."/>
            <person name="Hauser H."/>
            <person name="James K.D."/>
            <person name="Quiles M."/>
            <person name="Madan Babu M."/>
            <person name="Saito T."/>
            <person name="Buchrieser C."/>
            <person name="Wardroper A."/>
            <person name="Felder M."/>
            <person name="Thangavelu M."/>
            <person name="Johnson D."/>
            <person name="Knights A."/>
            <person name="Loulseged H."/>
            <person name="Mungall K.L."/>
            <person name="Oliver K."/>
            <person name="Price C."/>
            <person name="Quail M.A."/>
            <person name="Urushihara H."/>
            <person name="Hernandez J."/>
            <person name="Rabbinowitsch E."/>
            <person name="Steffen D."/>
            <person name="Sanders M."/>
            <person name="Ma J."/>
            <person name="Kohara Y."/>
            <person name="Sharp S."/>
            <person name="Simmonds M.N."/>
            <person name="Spiegler S."/>
            <person name="Tivey A."/>
            <person name="Sugano S."/>
            <person name="White B."/>
            <person name="Walker D."/>
            <person name="Woodward J.R."/>
            <person name="Winckler T."/>
            <person name="Tanaka Y."/>
            <person name="Shaulsky G."/>
            <person name="Schleicher M."/>
            <person name="Weinstock G.M."/>
            <person name="Rosenthal A."/>
            <person name="Cox E.C."/>
            <person name="Chisholm R.L."/>
            <person name="Gibbs R.A."/>
            <person name="Loomis W.F."/>
            <person name="Platzer M."/>
            <person name="Kay R.R."/>
            <person name="Williams J.G."/>
            <person name="Dear P.H."/>
            <person name="Noegel A.A."/>
            <person name="Barrell B.G."/>
            <person name="Kuspa A."/>
        </authorList>
    </citation>
    <scope>NUCLEOTIDE SEQUENCE [LARGE SCALE GENOMIC DNA]</scope>
    <source>
        <strain>AX4</strain>
    </source>
</reference>
<reference key="2">
    <citation type="journal article" date="2006" name="Eur. J. Cell Biol.">
        <title>The Dictyostelium repertoire of seven transmembrane domain receptors.</title>
        <authorList>
            <person name="Prabhu Y."/>
            <person name="Eichinger L."/>
        </authorList>
    </citation>
    <scope>NOMENCLATURE</scope>
</reference>
<reference key="3">
    <citation type="journal article" date="2007" name="BMC Dev. Biol.">
        <title>GrlJ, a Dictyostelium GABAB-like receptor with roles in post-aggregation development.</title>
        <authorList>
            <person name="Prabhu Y."/>
            <person name="Mueller R."/>
            <person name="Anjard C."/>
            <person name="Noegel A.A."/>
        </authorList>
    </citation>
    <scope>DEVELOPMENTAL STAGE</scope>
</reference>
<keyword id="KW-0175">Coiled coil</keyword>
<keyword id="KW-0297">G-protein coupled receptor</keyword>
<keyword id="KW-0325">Glycoprotein</keyword>
<keyword id="KW-0472">Membrane</keyword>
<keyword id="KW-0675">Receptor</keyword>
<keyword id="KW-1185">Reference proteome</keyword>
<keyword id="KW-0732">Signal</keyword>
<keyword id="KW-0807">Transducer</keyword>
<keyword id="KW-0812">Transmembrane</keyword>
<keyword id="KW-1133">Transmembrane helix</keyword>
<sequence length="1604" mass="181089">MVIKKPFIFIFICFLICLLICIDLTNCNTINNNNNNNNNNNNNNNNNNNNNNNNNNNNNNNNNNNNNDNNENHKILKDYLKFTKRFKKSEYPTTEQQDFYINKIKKEIKDREKYKNNIENEILKINSQKKRKKFKRKDLNTDIKTNHEQLRKLIENNVNPNPHYYDETQSFYFTNRMTSNNEKNNKKNLNFNNDNNKINNLINIKNNNIPYINNNNNNNNNNNNNNNNNNKNNNNNNNNKNNNNNNNNKNNNNNNNNKNNNKNKKIIINNNNLINNKLVSETSANMTTMVNSGDASLRSLINFLTTQDNNGLRFFPYSPRDLINPFNATKAISVAFAYNDRQLITPGAFSKENEEIRANQSRSQGLFDPNSPNMNFSSFYDIIDQQQTNFVQNIELSIDYLLNQVYFKEIFSKKDFKTQARDFEALFEFLKQQGTRVVYYYIANDGSNHVECGGSIKPCQDLAYLLQSVPMADRIQTDLVVFFYPGRYNITKRIVIDNFSKVQLVGLFGKDETTLTSNQKMFLFNNTHIHMIGLTIADVNFQMKPLLNIFKTDNLGTGTVFDLRQSIMTILLCDFRNISNRNSLGSVFAYNSNLTVSNTLFENTIAAVGGGIFCCSYSTCIVSNCTFRANIADNPIGGGALIASLSTLFITQSAFYNNKASIGGSVIIDGGFSTVDTSTFEYNTGFVGSAIQISPNSIVYIVNCYFYFNLATYSGASIFCGSSTVVFISKCIFKDNYSPGANGLESYSEKLVLIEESVFEGNIPPLLNSTSVVSIASPSAFLFVRQCSFFGHSGVIFNIGNPSVLYCSFSLFYENSNRIVNSFNNGLIVFGSCKLFNNSNNKSDGIFRINNRSNGIFYAVEFYNNTVSSFFESWFNSTCFLLSSNITNNTFRAGSFQVAFSTDIFVDNLLYSNNTAAEGGLISSDQTGGISVTNSLLIGNTAEFGNLVFFRLLSYSEPNCDSFIFENNTYVDNYAFMAGTIVYFDDTIRCNYSCINCVSVNNNAQYGEIVNTGFATFSSTLPNTIPPSIIRPIILQAFDALGLPYLGRSDITFNLLINLLICDQMSLTGVVQSTSTPTSFSVFYNVRISGAPGTHCNLTVIAFLKTFKNITLEYPITVVNCQEGQDPYNIGGVNSYYCLTDVSKTKIAKIIIGISAIIVSIGVLITAILTFIYRKRKIMRYSNPVFLLIILVGCVCGLVSTFVSFSTTSATCSIRMVLIPLFFFIITSAIFIKQYRVYCLIRGVEELHDMSIENSYLLKLQSFILIIPAILIAVSVIATRMHRKYNFDLQKETIQAYCYSKNFYIIFICLALYEFSILLYGCWIVIKCRQYRSFPGSFNEFFYIGVLIYVLTVILVVSIPIGFALLNSALTDFLLYSIPILVLIVAIIGLLFAPKFYFLFRTDKVIANLRQLIEDQEEILKKNKEVLFTYGMYLGDNNNDIIALHESFSDSDILSKTGSNTSDDVSDDFTFDSPTTYSNIPIPLNRRNNNNNNINNNNNNNNNNNNNNNNNNNNNNNNNILNNNKNNNNDDDASSSNSSSTADFEISSSGESGRSSNDYDKRNNKKNRRKNSLRTPILNSLLSPNSRNKTKKRNKSSQNSPLLD</sequence>
<name>GRLR_DICDI</name>
<evidence type="ECO:0000255" key="1"/>
<evidence type="ECO:0000256" key="2">
    <source>
        <dbReference type="SAM" id="MobiDB-lite"/>
    </source>
</evidence>
<evidence type="ECO:0000269" key="3">
    <source>
    </source>
</evidence>
<evidence type="ECO:0000305" key="4"/>
<protein>
    <recommendedName>
        <fullName>Metabotropic glutamate receptor-like protein R</fullName>
    </recommendedName>
</protein>
<organism>
    <name type="scientific">Dictyostelium discoideum</name>
    <name type="common">Social amoeba</name>
    <dbReference type="NCBI Taxonomy" id="44689"/>
    <lineage>
        <taxon>Eukaryota</taxon>
        <taxon>Amoebozoa</taxon>
        <taxon>Evosea</taxon>
        <taxon>Eumycetozoa</taxon>
        <taxon>Dictyostelia</taxon>
        <taxon>Dictyosteliales</taxon>
        <taxon>Dictyosteliaceae</taxon>
        <taxon>Dictyostelium</taxon>
    </lineage>
</organism>
<gene>
    <name type="primary">grlR</name>
    <name type="ORF">DDB_G0287681</name>
</gene>
<proteinExistence type="evidence at transcript level"/>
<comment type="subcellular location">
    <subcellularLocation>
        <location evidence="4">Membrane</location>
        <topology evidence="4">Multi-pass membrane protein</topology>
    </subcellularLocation>
</comment>
<comment type="developmental stage">
    <text evidence="3">Increased levels found from the tight aggregation stage onward. Levels stayed high during late development. Clear expression at 24 hours when fruiting body formation is close to completion.</text>
</comment>
<comment type="similarity">
    <text evidence="4">Belongs to the G-protein coupled receptor 3 family. GABA-B receptor subfamily.</text>
</comment>